<comment type="function">
    <text evidence="1">Catalyzes the methylthiolation of an aspartic acid residue of ribosomal protein uS12.</text>
</comment>
<comment type="catalytic activity">
    <reaction evidence="1">
        <text>L-aspartate(89)-[ribosomal protein uS12]-hydrogen + (sulfur carrier)-SH + AH2 + 2 S-adenosyl-L-methionine = 3-methylsulfanyl-L-aspartate(89)-[ribosomal protein uS12]-hydrogen + (sulfur carrier)-H + 5'-deoxyadenosine + L-methionine + A + S-adenosyl-L-homocysteine + 2 H(+)</text>
        <dbReference type="Rhea" id="RHEA:37087"/>
        <dbReference type="Rhea" id="RHEA-COMP:10460"/>
        <dbReference type="Rhea" id="RHEA-COMP:10461"/>
        <dbReference type="Rhea" id="RHEA-COMP:14737"/>
        <dbReference type="Rhea" id="RHEA-COMP:14739"/>
        <dbReference type="ChEBI" id="CHEBI:13193"/>
        <dbReference type="ChEBI" id="CHEBI:15378"/>
        <dbReference type="ChEBI" id="CHEBI:17319"/>
        <dbReference type="ChEBI" id="CHEBI:17499"/>
        <dbReference type="ChEBI" id="CHEBI:29917"/>
        <dbReference type="ChEBI" id="CHEBI:29961"/>
        <dbReference type="ChEBI" id="CHEBI:57844"/>
        <dbReference type="ChEBI" id="CHEBI:57856"/>
        <dbReference type="ChEBI" id="CHEBI:59789"/>
        <dbReference type="ChEBI" id="CHEBI:64428"/>
        <dbReference type="ChEBI" id="CHEBI:73599"/>
        <dbReference type="EC" id="2.8.4.4"/>
    </reaction>
</comment>
<comment type="cofactor">
    <cofactor evidence="1">
        <name>[4Fe-4S] cluster</name>
        <dbReference type="ChEBI" id="CHEBI:49883"/>
    </cofactor>
    <text evidence="1">Binds 2 [4Fe-4S] clusters. One cluster is coordinated with 3 cysteines and an exchangeable S-adenosyl-L-methionine.</text>
</comment>
<comment type="subcellular location">
    <subcellularLocation>
        <location evidence="1">Cytoplasm</location>
    </subcellularLocation>
</comment>
<comment type="similarity">
    <text evidence="1">Belongs to the methylthiotransferase family. RimO subfamily.</text>
</comment>
<sequence>MTAASSLHPPAIPRVGFVSLGCPKATVDSERILTCLRAEGYLISPNYADADLVVVNTCGFIDSAVAESLETIGEALTENGKVIVTGCLGAKEDVIRQAHPSVLAVTGPQATEEVMAAIHHHLPKPHDPYLDLVPPQGIKLTPKHYAYLKISEGCNHHCTFCIIPSMRGDLVSRPVGGVLQEAQSLVEAGVKELLIISQDTSAYGVDIKYRTGFWQGRPVRTRITELANALGEFGIWVRLHYVYPYPHVDELIPLMAEGKLLPYLDIPFQHANKRILKLMKRPANSENVLVRIQQWRKTCPDIALRSTFIVGFPGETEAEFEELLAFLEEAQLDRVGAFTYSPVKGAAANVLPDHVPPEIQQERLERLMQQQEIISKQRLAVKKGQQLRVLVDTVDEEGAIARSYADAPEIDGVVYINDASTLKPGDWADVRVTDTDIHDLWTEKI</sequence>
<name>RIMO_NITEC</name>
<feature type="chain" id="PRO_0000374903" description="Ribosomal protein uS12 methylthiotransferase RimO">
    <location>
        <begin position="1"/>
        <end position="445"/>
    </location>
</feature>
<feature type="domain" description="MTTase N-terminal" evidence="1">
    <location>
        <begin position="13"/>
        <end position="123"/>
    </location>
</feature>
<feature type="domain" description="Radical SAM core" evidence="2">
    <location>
        <begin position="140"/>
        <end position="377"/>
    </location>
</feature>
<feature type="domain" description="TRAM" evidence="1">
    <location>
        <begin position="380"/>
        <end position="445"/>
    </location>
</feature>
<feature type="binding site" evidence="1">
    <location>
        <position position="22"/>
    </location>
    <ligand>
        <name>[4Fe-4S] cluster</name>
        <dbReference type="ChEBI" id="CHEBI:49883"/>
        <label>1</label>
    </ligand>
</feature>
<feature type="binding site" evidence="1">
    <location>
        <position position="58"/>
    </location>
    <ligand>
        <name>[4Fe-4S] cluster</name>
        <dbReference type="ChEBI" id="CHEBI:49883"/>
        <label>1</label>
    </ligand>
</feature>
<feature type="binding site" evidence="1">
    <location>
        <position position="87"/>
    </location>
    <ligand>
        <name>[4Fe-4S] cluster</name>
        <dbReference type="ChEBI" id="CHEBI:49883"/>
        <label>1</label>
    </ligand>
</feature>
<feature type="binding site" evidence="1">
    <location>
        <position position="154"/>
    </location>
    <ligand>
        <name>[4Fe-4S] cluster</name>
        <dbReference type="ChEBI" id="CHEBI:49883"/>
        <label>2</label>
        <note>4Fe-4S-S-AdoMet</note>
    </ligand>
</feature>
<feature type="binding site" evidence="1">
    <location>
        <position position="158"/>
    </location>
    <ligand>
        <name>[4Fe-4S] cluster</name>
        <dbReference type="ChEBI" id="CHEBI:49883"/>
        <label>2</label>
        <note>4Fe-4S-S-AdoMet</note>
    </ligand>
</feature>
<feature type="binding site" evidence="1">
    <location>
        <position position="161"/>
    </location>
    <ligand>
        <name>[4Fe-4S] cluster</name>
        <dbReference type="ChEBI" id="CHEBI:49883"/>
        <label>2</label>
        <note>4Fe-4S-S-AdoMet</note>
    </ligand>
</feature>
<dbReference type="EC" id="2.8.4.4" evidence="1"/>
<dbReference type="EMBL" id="CP000450">
    <property type="protein sequence ID" value="ABI59637.1"/>
    <property type="molecule type" value="Genomic_DNA"/>
</dbReference>
<dbReference type="RefSeq" id="WP_011634443.1">
    <property type="nucleotide sequence ID" value="NC_008344.1"/>
</dbReference>
<dbReference type="SMR" id="Q0AG95"/>
<dbReference type="STRING" id="335283.Neut_1389"/>
<dbReference type="KEGG" id="net:Neut_1389"/>
<dbReference type="eggNOG" id="COG0621">
    <property type="taxonomic scope" value="Bacteria"/>
</dbReference>
<dbReference type="HOGENOM" id="CLU_018697_0_0_4"/>
<dbReference type="OrthoDB" id="9805215at2"/>
<dbReference type="Proteomes" id="UP000001966">
    <property type="component" value="Chromosome"/>
</dbReference>
<dbReference type="GO" id="GO:0005829">
    <property type="term" value="C:cytosol"/>
    <property type="evidence" value="ECO:0007669"/>
    <property type="project" value="TreeGrafter"/>
</dbReference>
<dbReference type="GO" id="GO:0051539">
    <property type="term" value="F:4 iron, 4 sulfur cluster binding"/>
    <property type="evidence" value="ECO:0007669"/>
    <property type="project" value="UniProtKB-UniRule"/>
</dbReference>
<dbReference type="GO" id="GO:0035599">
    <property type="term" value="F:aspartic acid methylthiotransferase activity"/>
    <property type="evidence" value="ECO:0007669"/>
    <property type="project" value="TreeGrafter"/>
</dbReference>
<dbReference type="GO" id="GO:0046872">
    <property type="term" value="F:metal ion binding"/>
    <property type="evidence" value="ECO:0007669"/>
    <property type="project" value="UniProtKB-KW"/>
</dbReference>
<dbReference type="GO" id="GO:0103039">
    <property type="term" value="F:protein methylthiotransferase activity"/>
    <property type="evidence" value="ECO:0007669"/>
    <property type="project" value="UniProtKB-EC"/>
</dbReference>
<dbReference type="GO" id="GO:0006400">
    <property type="term" value="P:tRNA modification"/>
    <property type="evidence" value="ECO:0007669"/>
    <property type="project" value="InterPro"/>
</dbReference>
<dbReference type="CDD" id="cd01335">
    <property type="entry name" value="Radical_SAM"/>
    <property type="match status" value="1"/>
</dbReference>
<dbReference type="FunFam" id="3.40.50.12160:FF:000002">
    <property type="entry name" value="Ribosomal protein S12 methylthiotransferase RimO"/>
    <property type="match status" value="1"/>
</dbReference>
<dbReference type="FunFam" id="3.80.30.20:FF:000001">
    <property type="entry name" value="tRNA-2-methylthio-N(6)-dimethylallyladenosine synthase 2"/>
    <property type="match status" value="1"/>
</dbReference>
<dbReference type="Gene3D" id="3.40.50.12160">
    <property type="entry name" value="Methylthiotransferase, N-terminal domain"/>
    <property type="match status" value="1"/>
</dbReference>
<dbReference type="Gene3D" id="2.40.50.140">
    <property type="entry name" value="Nucleic acid-binding proteins"/>
    <property type="match status" value="1"/>
</dbReference>
<dbReference type="Gene3D" id="3.80.30.20">
    <property type="entry name" value="tm_1862 like domain"/>
    <property type="match status" value="1"/>
</dbReference>
<dbReference type="HAMAP" id="MF_01865">
    <property type="entry name" value="MTTase_RimO"/>
    <property type="match status" value="1"/>
</dbReference>
<dbReference type="InterPro" id="IPR006638">
    <property type="entry name" value="Elp3/MiaA/NifB-like_rSAM"/>
</dbReference>
<dbReference type="InterPro" id="IPR005839">
    <property type="entry name" value="Methylthiotransferase"/>
</dbReference>
<dbReference type="InterPro" id="IPR020612">
    <property type="entry name" value="Methylthiotransferase_CS"/>
</dbReference>
<dbReference type="InterPro" id="IPR013848">
    <property type="entry name" value="Methylthiotransferase_N"/>
</dbReference>
<dbReference type="InterPro" id="IPR038135">
    <property type="entry name" value="Methylthiotransferase_N_sf"/>
</dbReference>
<dbReference type="InterPro" id="IPR012340">
    <property type="entry name" value="NA-bd_OB-fold"/>
</dbReference>
<dbReference type="InterPro" id="IPR005840">
    <property type="entry name" value="Ribosomal_uS12_MeSTrfase_RimO"/>
</dbReference>
<dbReference type="InterPro" id="IPR007197">
    <property type="entry name" value="rSAM"/>
</dbReference>
<dbReference type="InterPro" id="IPR023404">
    <property type="entry name" value="rSAM_horseshoe"/>
</dbReference>
<dbReference type="InterPro" id="IPR002792">
    <property type="entry name" value="TRAM_dom"/>
</dbReference>
<dbReference type="NCBIfam" id="TIGR01125">
    <property type="entry name" value="30S ribosomal protein S12 methylthiotransferase RimO"/>
    <property type="match status" value="1"/>
</dbReference>
<dbReference type="NCBIfam" id="TIGR00089">
    <property type="entry name" value="MiaB/RimO family radical SAM methylthiotransferase"/>
    <property type="match status" value="1"/>
</dbReference>
<dbReference type="PANTHER" id="PTHR43837">
    <property type="entry name" value="RIBOSOMAL PROTEIN S12 METHYLTHIOTRANSFERASE RIMO"/>
    <property type="match status" value="1"/>
</dbReference>
<dbReference type="PANTHER" id="PTHR43837:SF1">
    <property type="entry name" value="RIBOSOMAL PROTEIN US12 METHYLTHIOTRANSFERASE RIMO"/>
    <property type="match status" value="1"/>
</dbReference>
<dbReference type="Pfam" id="PF04055">
    <property type="entry name" value="Radical_SAM"/>
    <property type="match status" value="1"/>
</dbReference>
<dbReference type="Pfam" id="PF18693">
    <property type="entry name" value="TRAM_2"/>
    <property type="match status" value="1"/>
</dbReference>
<dbReference type="Pfam" id="PF00919">
    <property type="entry name" value="UPF0004"/>
    <property type="match status" value="1"/>
</dbReference>
<dbReference type="SFLD" id="SFLDG01082">
    <property type="entry name" value="B12-binding_domain_containing"/>
    <property type="match status" value="1"/>
</dbReference>
<dbReference type="SFLD" id="SFLDG01061">
    <property type="entry name" value="methylthiotransferase"/>
    <property type="match status" value="1"/>
</dbReference>
<dbReference type="SFLD" id="SFLDF00274">
    <property type="entry name" value="ribosomal_protein_S12_methylth"/>
    <property type="match status" value="1"/>
</dbReference>
<dbReference type="SMART" id="SM00729">
    <property type="entry name" value="Elp3"/>
    <property type="match status" value="1"/>
</dbReference>
<dbReference type="SUPFAM" id="SSF102114">
    <property type="entry name" value="Radical SAM enzymes"/>
    <property type="match status" value="1"/>
</dbReference>
<dbReference type="PROSITE" id="PS51449">
    <property type="entry name" value="MTTASE_N"/>
    <property type="match status" value="1"/>
</dbReference>
<dbReference type="PROSITE" id="PS01278">
    <property type="entry name" value="MTTASE_RADICAL"/>
    <property type="match status" value="1"/>
</dbReference>
<dbReference type="PROSITE" id="PS51918">
    <property type="entry name" value="RADICAL_SAM"/>
    <property type="match status" value="1"/>
</dbReference>
<dbReference type="PROSITE" id="PS50926">
    <property type="entry name" value="TRAM"/>
    <property type="match status" value="1"/>
</dbReference>
<accession>Q0AG95</accession>
<evidence type="ECO:0000255" key="1">
    <source>
        <dbReference type="HAMAP-Rule" id="MF_01865"/>
    </source>
</evidence>
<evidence type="ECO:0000255" key="2">
    <source>
        <dbReference type="PROSITE-ProRule" id="PRU01266"/>
    </source>
</evidence>
<organism>
    <name type="scientific">Nitrosomonas eutropha (strain DSM 101675 / C91 / Nm57)</name>
    <dbReference type="NCBI Taxonomy" id="335283"/>
    <lineage>
        <taxon>Bacteria</taxon>
        <taxon>Pseudomonadati</taxon>
        <taxon>Pseudomonadota</taxon>
        <taxon>Betaproteobacteria</taxon>
        <taxon>Nitrosomonadales</taxon>
        <taxon>Nitrosomonadaceae</taxon>
        <taxon>Nitrosomonas</taxon>
    </lineage>
</organism>
<protein>
    <recommendedName>
        <fullName evidence="1">Ribosomal protein uS12 methylthiotransferase RimO</fullName>
        <shortName evidence="1">uS12 MTTase</shortName>
        <shortName evidence="1">uS12 methylthiotransferase</shortName>
        <ecNumber evidence="1">2.8.4.4</ecNumber>
    </recommendedName>
    <alternativeName>
        <fullName evidence="1">Ribosomal protein uS12 (aspartate-C(3))-methylthiotransferase</fullName>
    </alternativeName>
    <alternativeName>
        <fullName evidence="1">Ribosome maturation factor RimO</fullName>
    </alternativeName>
</protein>
<reference key="1">
    <citation type="journal article" date="2007" name="Environ. Microbiol.">
        <title>Whole-genome analysis of the ammonia-oxidizing bacterium, Nitrosomonas eutropha C91: implications for niche adaptation.</title>
        <authorList>
            <person name="Stein L.Y."/>
            <person name="Arp D.J."/>
            <person name="Berube P.M."/>
            <person name="Chain P.S."/>
            <person name="Hauser L."/>
            <person name="Jetten M.S."/>
            <person name="Klotz M.G."/>
            <person name="Larimer F.W."/>
            <person name="Norton J.M."/>
            <person name="Op den Camp H.J.M."/>
            <person name="Shin M."/>
            <person name="Wei X."/>
        </authorList>
    </citation>
    <scope>NUCLEOTIDE SEQUENCE [LARGE SCALE GENOMIC DNA]</scope>
    <source>
        <strain>DSM 101675 / C91 / Nm57</strain>
    </source>
</reference>
<keyword id="KW-0004">4Fe-4S</keyword>
<keyword id="KW-0963">Cytoplasm</keyword>
<keyword id="KW-0408">Iron</keyword>
<keyword id="KW-0411">Iron-sulfur</keyword>
<keyword id="KW-0479">Metal-binding</keyword>
<keyword id="KW-0949">S-adenosyl-L-methionine</keyword>
<keyword id="KW-0808">Transferase</keyword>
<proteinExistence type="inferred from homology"/>
<gene>
    <name evidence="1" type="primary">rimO</name>
    <name type="ordered locus">Neut_1389</name>
</gene>